<gene>
    <name evidence="1" type="primary">recO</name>
    <name type="ordered locus">BPUM_2260</name>
</gene>
<name>RECO_BACP2</name>
<dbReference type="EMBL" id="CP000813">
    <property type="protein sequence ID" value="ABV62929.1"/>
    <property type="molecule type" value="Genomic_DNA"/>
</dbReference>
<dbReference type="RefSeq" id="WP_012010612.1">
    <property type="nucleotide sequence ID" value="NZ_VEIS01000005.1"/>
</dbReference>
<dbReference type="SMR" id="A8FFB2"/>
<dbReference type="STRING" id="315750.BPUM_2260"/>
<dbReference type="GeneID" id="5621526"/>
<dbReference type="KEGG" id="bpu:BPUM_2260"/>
<dbReference type="eggNOG" id="COG1381">
    <property type="taxonomic scope" value="Bacteria"/>
</dbReference>
<dbReference type="HOGENOM" id="CLU_066632_4_0_9"/>
<dbReference type="OrthoDB" id="9797083at2"/>
<dbReference type="Proteomes" id="UP000001355">
    <property type="component" value="Chromosome"/>
</dbReference>
<dbReference type="GO" id="GO:0043590">
    <property type="term" value="C:bacterial nucleoid"/>
    <property type="evidence" value="ECO:0007669"/>
    <property type="project" value="TreeGrafter"/>
</dbReference>
<dbReference type="GO" id="GO:0006310">
    <property type="term" value="P:DNA recombination"/>
    <property type="evidence" value="ECO:0007669"/>
    <property type="project" value="UniProtKB-UniRule"/>
</dbReference>
<dbReference type="GO" id="GO:0006302">
    <property type="term" value="P:double-strand break repair"/>
    <property type="evidence" value="ECO:0007669"/>
    <property type="project" value="TreeGrafter"/>
</dbReference>
<dbReference type="Gene3D" id="2.40.50.140">
    <property type="entry name" value="Nucleic acid-binding proteins"/>
    <property type="match status" value="1"/>
</dbReference>
<dbReference type="Gene3D" id="1.20.1440.120">
    <property type="entry name" value="Recombination protein O, C-terminal domain"/>
    <property type="match status" value="1"/>
</dbReference>
<dbReference type="HAMAP" id="MF_00201">
    <property type="entry name" value="RecO"/>
    <property type="match status" value="1"/>
</dbReference>
<dbReference type="InterPro" id="IPR037278">
    <property type="entry name" value="ARFGAP/RecO"/>
</dbReference>
<dbReference type="InterPro" id="IPR022572">
    <property type="entry name" value="DNA_rep/recomb_RecO_N"/>
</dbReference>
<dbReference type="InterPro" id="IPR012340">
    <property type="entry name" value="NA-bd_OB-fold"/>
</dbReference>
<dbReference type="InterPro" id="IPR003717">
    <property type="entry name" value="RecO"/>
</dbReference>
<dbReference type="InterPro" id="IPR042242">
    <property type="entry name" value="RecO_C"/>
</dbReference>
<dbReference type="NCBIfam" id="TIGR00613">
    <property type="entry name" value="reco"/>
    <property type="match status" value="1"/>
</dbReference>
<dbReference type="PANTHER" id="PTHR33991">
    <property type="entry name" value="DNA REPAIR PROTEIN RECO"/>
    <property type="match status" value="1"/>
</dbReference>
<dbReference type="PANTHER" id="PTHR33991:SF1">
    <property type="entry name" value="DNA REPAIR PROTEIN RECO"/>
    <property type="match status" value="1"/>
</dbReference>
<dbReference type="Pfam" id="PF02565">
    <property type="entry name" value="RecO_C"/>
    <property type="match status" value="1"/>
</dbReference>
<dbReference type="Pfam" id="PF11967">
    <property type="entry name" value="RecO_N"/>
    <property type="match status" value="1"/>
</dbReference>
<dbReference type="SUPFAM" id="SSF57863">
    <property type="entry name" value="ArfGap/RecO-like zinc finger"/>
    <property type="match status" value="1"/>
</dbReference>
<dbReference type="SUPFAM" id="SSF50249">
    <property type="entry name" value="Nucleic acid-binding proteins"/>
    <property type="match status" value="1"/>
</dbReference>
<evidence type="ECO:0000255" key="1">
    <source>
        <dbReference type="HAMAP-Rule" id="MF_00201"/>
    </source>
</evidence>
<proteinExistence type="inferred from homology"/>
<accession>A8FFB2</accession>
<organism>
    <name type="scientific">Bacillus pumilus (strain SAFR-032)</name>
    <dbReference type="NCBI Taxonomy" id="315750"/>
    <lineage>
        <taxon>Bacteria</taxon>
        <taxon>Bacillati</taxon>
        <taxon>Bacillota</taxon>
        <taxon>Bacilli</taxon>
        <taxon>Bacillales</taxon>
        <taxon>Bacillaceae</taxon>
        <taxon>Bacillus</taxon>
    </lineage>
</organism>
<reference key="1">
    <citation type="journal article" date="2007" name="PLoS ONE">
        <title>Paradoxical DNA repair and peroxide resistance gene conservation in Bacillus pumilus SAFR-032.</title>
        <authorList>
            <person name="Gioia J."/>
            <person name="Yerrapragada S."/>
            <person name="Qin X."/>
            <person name="Jiang H."/>
            <person name="Igboeli O.C."/>
            <person name="Muzny D."/>
            <person name="Dugan-Rocha S."/>
            <person name="Ding Y."/>
            <person name="Hawes A."/>
            <person name="Liu W."/>
            <person name="Perez L."/>
            <person name="Kovar C."/>
            <person name="Dinh H."/>
            <person name="Lee S."/>
            <person name="Nazareth L."/>
            <person name="Blyth P."/>
            <person name="Holder M."/>
            <person name="Buhay C."/>
            <person name="Tirumalai M.R."/>
            <person name="Liu Y."/>
            <person name="Dasgupta I."/>
            <person name="Bokhetache L."/>
            <person name="Fujita M."/>
            <person name="Karouia F."/>
            <person name="Eswara Moorthy P."/>
            <person name="Siefert J."/>
            <person name="Uzman A."/>
            <person name="Buzumbo P."/>
            <person name="Verma A."/>
            <person name="Zwiya H."/>
            <person name="McWilliams B.D."/>
            <person name="Olowu A."/>
            <person name="Clinkenbeard K.D."/>
            <person name="Newcombe D."/>
            <person name="Golebiewski L."/>
            <person name="Petrosino J.F."/>
            <person name="Nicholson W.L."/>
            <person name="Fox G.E."/>
            <person name="Venkateswaran K."/>
            <person name="Highlander S.K."/>
            <person name="Weinstock G.M."/>
        </authorList>
    </citation>
    <scope>NUCLEOTIDE SEQUENCE [LARGE SCALE GENOMIC DNA]</scope>
    <source>
        <strain>SAFR-032</strain>
    </source>
</reference>
<sequence length="256" mass="29231">MLIKSEGIVLRTTDYGETNKIVTLLTREHGKIGVMARGAKKSNSRLSAISQPFLYGTFLIQSSTGLGTLQQGEMIESMRTIREDLFLTAYAAYMTELLDKGTEEKKPNPYLFELLLQSLRHLNEGTDADIILFIVEVKMLSVMGMKPELDQCVHCGQKEGQFHFSIRDNGFICQNCFSKDPYKLPLSPAAARLLRLFHYFDLSRLGQVDVKPQTKQEIRQVLDHYYDEYSGLYLKSKKFMNQMESMKKLMGGENKS</sequence>
<comment type="function">
    <text evidence="1">Involved in DNA repair and RecF pathway recombination.</text>
</comment>
<comment type="similarity">
    <text evidence="1">Belongs to the RecO family.</text>
</comment>
<keyword id="KW-0227">DNA damage</keyword>
<keyword id="KW-0233">DNA recombination</keyword>
<keyword id="KW-0234">DNA repair</keyword>
<protein>
    <recommendedName>
        <fullName evidence="1">DNA repair protein RecO</fullName>
    </recommendedName>
    <alternativeName>
        <fullName evidence="1">Recombination protein O</fullName>
    </alternativeName>
</protein>
<feature type="chain" id="PRO_1000058563" description="DNA repair protein RecO">
    <location>
        <begin position="1"/>
        <end position="256"/>
    </location>
</feature>